<sequence length="94" mass="10624">MTVLTDEQVDAALLDLNDWKHTDGALCRSIKFPTFLAGIDAVCRVAEHAETKDHHPDIDIRYRTVTFILVTHYADGITKKDITMARDIDRLIGD</sequence>
<accession>Q9CBX1</accession>
<protein>
    <recommendedName>
        <fullName>Putative pterin-4-alpha-carbinolamine dehydratase</fullName>
        <shortName>PHS</shortName>
        <ecNumber>4.2.1.96</ecNumber>
    </recommendedName>
    <alternativeName>
        <fullName>4-alpha-hydroxy-tetrahydropterin dehydratase</fullName>
    </alternativeName>
    <alternativeName>
        <fullName>Pterin carbinolamine dehydratase</fullName>
        <shortName>PCD</shortName>
    </alternativeName>
</protein>
<comment type="catalytic activity">
    <reaction>
        <text>(4aS,6R)-4a-hydroxy-L-erythro-5,6,7,8-tetrahydrobiopterin = (6R)-L-erythro-6,7-dihydrobiopterin + H2O</text>
        <dbReference type="Rhea" id="RHEA:11920"/>
        <dbReference type="ChEBI" id="CHEBI:15377"/>
        <dbReference type="ChEBI" id="CHEBI:15642"/>
        <dbReference type="ChEBI" id="CHEBI:43120"/>
        <dbReference type="EC" id="4.2.1.96"/>
    </reaction>
</comment>
<comment type="similarity">
    <text evidence="1">Belongs to the pterin-4-alpha-carbinolamine dehydratase family.</text>
</comment>
<feature type="chain" id="PRO_0000063084" description="Putative pterin-4-alpha-carbinolamine dehydratase">
    <location>
        <begin position="1"/>
        <end position="94"/>
    </location>
</feature>
<gene>
    <name type="ordered locus">ML1503.1</name>
    <name type="ORF">ML1503A</name>
</gene>
<name>PHS_MYCLE</name>
<proteinExistence type="inferred from homology"/>
<dbReference type="EC" id="4.2.1.96"/>
<dbReference type="EMBL" id="AL583922">
    <property type="protein sequence ID" value="CAC30454.1"/>
    <property type="molecule type" value="Genomic_DNA"/>
</dbReference>
<dbReference type="PIR" id="A87097">
    <property type="entry name" value="A87097"/>
</dbReference>
<dbReference type="RefSeq" id="NP_302053.1">
    <property type="nucleotide sequence ID" value="NC_002677.1"/>
</dbReference>
<dbReference type="RefSeq" id="WP_010908374.1">
    <property type="nucleotide sequence ID" value="NC_002677.1"/>
</dbReference>
<dbReference type="SMR" id="Q9CBX1"/>
<dbReference type="KEGG" id="mle:ML1503A"/>
<dbReference type="PATRIC" id="fig|272631.5.peg.2826"/>
<dbReference type="Leproma" id="ML1503A"/>
<dbReference type="eggNOG" id="COG2154">
    <property type="taxonomic scope" value="Bacteria"/>
</dbReference>
<dbReference type="HOGENOM" id="CLU_081974_4_3_11"/>
<dbReference type="OrthoDB" id="15077at2"/>
<dbReference type="Proteomes" id="UP000000806">
    <property type="component" value="Chromosome"/>
</dbReference>
<dbReference type="GO" id="GO:0008124">
    <property type="term" value="F:4-alpha-hydroxytetrahydrobiopterin dehydratase activity"/>
    <property type="evidence" value="ECO:0007669"/>
    <property type="project" value="UniProtKB-UniRule"/>
</dbReference>
<dbReference type="GO" id="GO:0006729">
    <property type="term" value="P:tetrahydrobiopterin biosynthetic process"/>
    <property type="evidence" value="ECO:0007669"/>
    <property type="project" value="InterPro"/>
</dbReference>
<dbReference type="CDD" id="cd00488">
    <property type="entry name" value="PCD_DCoH"/>
    <property type="match status" value="1"/>
</dbReference>
<dbReference type="Gene3D" id="3.30.1360.20">
    <property type="entry name" value="Transcriptional coactivator/pterin dehydratase"/>
    <property type="match status" value="1"/>
</dbReference>
<dbReference type="HAMAP" id="MF_00434">
    <property type="entry name" value="Pterin_4_alpha"/>
    <property type="match status" value="1"/>
</dbReference>
<dbReference type="InterPro" id="IPR036428">
    <property type="entry name" value="PCD_sf"/>
</dbReference>
<dbReference type="InterPro" id="IPR001533">
    <property type="entry name" value="Pterin_deHydtase"/>
</dbReference>
<dbReference type="NCBIfam" id="NF002017">
    <property type="entry name" value="PRK00823.1-2"/>
    <property type="match status" value="1"/>
</dbReference>
<dbReference type="PANTHER" id="PTHR12599">
    <property type="entry name" value="PTERIN-4-ALPHA-CARBINOLAMINE DEHYDRATASE"/>
    <property type="match status" value="1"/>
</dbReference>
<dbReference type="PANTHER" id="PTHR12599:SF0">
    <property type="entry name" value="PTERIN-4-ALPHA-CARBINOLAMINE DEHYDRATASE"/>
    <property type="match status" value="1"/>
</dbReference>
<dbReference type="Pfam" id="PF01329">
    <property type="entry name" value="Pterin_4a"/>
    <property type="match status" value="1"/>
</dbReference>
<dbReference type="SUPFAM" id="SSF55248">
    <property type="entry name" value="PCD-like"/>
    <property type="match status" value="1"/>
</dbReference>
<organism>
    <name type="scientific">Mycobacterium leprae (strain TN)</name>
    <dbReference type="NCBI Taxonomy" id="272631"/>
    <lineage>
        <taxon>Bacteria</taxon>
        <taxon>Bacillati</taxon>
        <taxon>Actinomycetota</taxon>
        <taxon>Actinomycetes</taxon>
        <taxon>Mycobacteriales</taxon>
        <taxon>Mycobacteriaceae</taxon>
        <taxon>Mycobacterium</taxon>
    </lineage>
</organism>
<keyword id="KW-0456">Lyase</keyword>
<keyword id="KW-1185">Reference proteome</keyword>
<reference key="1">
    <citation type="journal article" date="2001" name="Nature">
        <title>Massive gene decay in the leprosy bacillus.</title>
        <authorList>
            <person name="Cole S.T."/>
            <person name="Eiglmeier K."/>
            <person name="Parkhill J."/>
            <person name="James K.D."/>
            <person name="Thomson N.R."/>
            <person name="Wheeler P.R."/>
            <person name="Honore N."/>
            <person name="Garnier T."/>
            <person name="Churcher C.M."/>
            <person name="Harris D.E."/>
            <person name="Mungall K.L."/>
            <person name="Basham D."/>
            <person name="Brown D."/>
            <person name="Chillingworth T."/>
            <person name="Connor R."/>
            <person name="Davies R.M."/>
            <person name="Devlin K."/>
            <person name="Duthoy S."/>
            <person name="Feltwell T."/>
            <person name="Fraser A."/>
            <person name="Hamlin N."/>
            <person name="Holroyd S."/>
            <person name="Hornsby T."/>
            <person name="Jagels K."/>
            <person name="Lacroix C."/>
            <person name="Maclean J."/>
            <person name="Moule S."/>
            <person name="Murphy L.D."/>
            <person name="Oliver K."/>
            <person name="Quail M.A."/>
            <person name="Rajandream M.A."/>
            <person name="Rutherford K.M."/>
            <person name="Rutter S."/>
            <person name="Seeger K."/>
            <person name="Simon S."/>
            <person name="Simmonds M."/>
            <person name="Skelton J."/>
            <person name="Squares R."/>
            <person name="Squares S."/>
            <person name="Stevens K."/>
            <person name="Taylor K."/>
            <person name="Whitehead S."/>
            <person name="Woodward J.R."/>
            <person name="Barrell B.G."/>
        </authorList>
    </citation>
    <scope>NUCLEOTIDE SEQUENCE [LARGE SCALE GENOMIC DNA]</scope>
    <source>
        <strain>TN</strain>
    </source>
</reference>
<evidence type="ECO:0000305" key="1"/>